<protein>
    <recommendedName>
        <fullName evidence="1">Pyridoxal 5'-phosphate synthase subunit PdxT</fullName>
        <ecNumber evidence="1">4.3.3.6</ecNumber>
    </recommendedName>
    <alternativeName>
        <fullName evidence="1">Pdx2</fullName>
    </alternativeName>
    <alternativeName>
        <fullName evidence="1">Pyridoxal 5'-phosphate synthase glutaminase subunit</fullName>
        <ecNumber evidence="1">3.5.1.2</ecNumber>
    </alternativeName>
</protein>
<proteinExistence type="inferred from homology"/>
<reference key="1">
    <citation type="journal article" date="2008" name="Environ. Microbiol.">
        <title>The complete genome sequence of Moorella thermoacetica (f. Clostridium thermoaceticum).</title>
        <authorList>
            <person name="Pierce E."/>
            <person name="Xie G."/>
            <person name="Barabote R.D."/>
            <person name="Saunders E."/>
            <person name="Han C.S."/>
            <person name="Detter J.C."/>
            <person name="Richardson P."/>
            <person name="Brettin T.S."/>
            <person name="Das A."/>
            <person name="Ljungdahl L.G."/>
            <person name="Ragsdale S.W."/>
        </authorList>
    </citation>
    <scope>NUCLEOTIDE SEQUENCE [LARGE SCALE GENOMIC DNA]</scope>
    <source>
        <strain>ATCC 39073 / JCM 9320</strain>
    </source>
</reference>
<comment type="function">
    <text evidence="1">Catalyzes the hydrolysis of glutamine to glutamate and ammonia as part of the biosynthesis of pyridoxal 5'-phosphate. The resulting ammonia molecule is channeled to the active site of PdxS.</text>
</comment>
<comment type="catalytic activity">
    <reaction evidence="1">
        <text>aldehydo-D-ribose 5-phosphate + D-glyceraldehyde 3-phosphate + L-glutamine = pyridoxal 5'-phosphate + L-glutamate + phosphate + 3 H2O + H(+)</text>
        <dbReference type="Rhea" id="RHEA:31507"/>
        <dbReference type="ChEBI" id="CHEBI:15377"/>
        <dbReference type="ChEBI" id="CHEBI:15378"/>
        <dbReference type="ChEBI" id="CHEBI:29985"/>
        <dbReference type="ChEBI" id="CHEBI:43474"/>
        <dbReference type="ChEBI" id="CHEBI:58273"/>
        <dbReference type="ChEBI" id="CHEBI:58359"/>
        <dbReference type="ChEBI" id="CHEBI:59776"/>
        <dbReference type="ChEBI" id="CHEBI:597326"/>
        <dbReference type="EC" id="4.3.3.6"/>
    </reaction>
</comment>
<comment type="catalytic activity">
    <reaction evidence="1">
        <text>L-glutamine + H2O = L-glutamate + NH4(+)</text>
        <dbReference type="Rhea" id="RHEA:15889"/>
        <dbReference type="ChEBI" id="CHEBI:15377"/>
        <dbReference type="ChEBI" id="CHEBI:28938"/>
        <dbReference type="ChEBI" id="CHEBI:29985"/>
        <dbReference type="ChEBI" id="CHEBI:58359"/>
        <dbReference type="EC" id="3.5.1.2"/>
    </reaction>
</comment>
<comment type="pathway">
    <text evidence="1">Cofactor biosynthesis; pyridoxal 5'-phosphate biosynthesis.</text>
</comment>
<comment type="subunit">
    <text evidence="1">In the presence of PdxS, forms a dodecamer of heterodimers. Only shows activity in the heterodimer.</text>
</comment>
<comment type="similarity">
    <text evidence="1">Belongs to the glutaminase PdxT/SNO family.</text>
</comment>
<dbReference type="EC" id="4.3.3.6" evidence="1"/>
<dbReference type="EC" id="3.5.1.2" evidence="1"/>
<dbReference type="EMBL" id="CP000232">
    <property type="protein sequence ID" value="ABC18350.1"/>
    <property type="molecule type" value="Genomic_DNA"/>
</dbReference>
<dbReference type="RefSeq" id="YP_428893.1">
    <property type="nucleotide sequence ID" value="NC_007644.1"/>
</dbReference>
<dbReference type="SMR" id="Q2RMI9"/>
<dbReference type="STRING" id="264732.Moth_0010"/>
<dbReference type="MEROPS" id="C26.A32"/>
<dbReference type="EnsemblBacteria" id="ABC18350">
    <property type="protein sequence ID" value="ABC18350"/>
    <property type="gene ID" value="Moth_0010"/>
</dbReference>
<dbReference type="KEGG" id="mta:Moth_0010"/>
<dbReference type="PATRIC" id="fig|264732.11.peg.11"/>
<dbReference type="eggNOG" id="COG0311">
    <property type="taxonomic scope" value="Bacteria"/>
</dbReference>
<dbReference type="HOGENOM" id="CLU_069674_2_0_9"/>
<dbReference type="OrthoDB" id="9810320at2"/>
<dbReference type="UniPathway" id="UPA00245"/>
<dbReference type="GO" id="GO:0005829">
    <property type="term" value="C:cytosol"/>
    <property type="evidence" value="ECO:0007669"/>
    <property type="project" value="TreeGrafter"/>
</dbReference>
<dbReference type="GO" id="GO:1903600">
    <property type="term" value="C:glutaminase complex"/>
    <property type="evidence" value="ECO:0007669"/>
    <property type="project" value="TreeGrafter"/>
</dbReference>
<dbReference type="GO" id="GO:0004359">
    <property type="term" value="F:glutaminase activity"/>
    <property type="evidence" value="ECO:0007669"/>
    <property type="project" value="UniProtKB-UniRule"/>
</dbReference>
<dbReference type="GO" id="GO:0036381">
    <property type="term" value="F:pyridoxal 5'-phosphate synthase (glutamine hydrolysing) activity"/>
    <property type="evidence" value="ECO:0007669"/>
    <property type="project" value="UniProtKB-UniRule"/>
</dbReference>
<dbReference type="GO" id="GO:0006543">
    <property type="term" value="P:glutamine catabolic process"/>
    <property type="evidence" value="ECO:0007669"/>
    <property type="project" value="UniProtKB-UniRule"/>
</dbReference>
<dbReference type="GO" id="GO:0042823">
    <property type="term" value="P:pyridoxal phosphate biosynthetic process"/>
    <property type="evidence" value="ECO:0007669"/>
    <property type="project" value="UniProtKB-UniRule"/>
</dbReference>
<dbReference type="GO" id="GO:0008614">
    <property type="term" value="P:pyridoxine metabolic process"/>
    <property type="evidence" value="ECO:0007669"/>
    <property type="project" value="TreeGrafter"/>
</dbReference>
<dbReference type="CDD" id="cd01749">
    <property type="entry name" value="GATase1_PB"/>
    <property type="match status" value="1"/>
</dbReference>
<dbReference type="FunFam" id="3.40.50.880:FF:000010">
    <property type="entry name" value="uncharacterized protein LOC100176842 isoform X2"/>
    <property type="match status" value="1"/>
</dbReference>
<dbReference type="Gene3D" id="3.40.50.880">
    <property type="match status" value="1"/>
</dbReference>
<dbReference type="HAMAP" id="MF_01615">
    <property type="entry name" value="PdxT"/>
    <property type="match status" value="1"/>
</dbReference>
<dbReference type="InterPro" id="IPR029062">
    <property type="entry name" value="Class_I_gatase-like"/>
</dbReference>
<dbReference type="InterPro" id="IPR002161">
    <property type="entry name" value="PdxT/SNO"/>
</dbReference>
<dbReference type="InterPro" id="IPR021196">
    <property type="entry name" value="PdxT/SNO_CS"/>
</dbReference>
<dbReference type="NCBIfam" id="TIGR03800">
    <property type="entry name" value="PLP_synth_Pdx2"/>
    <property type="match status" value="1"/>
</dbReference>
<dbReference type="PANTHER" id="PTHR31559">
    <property type="entry name" value="PYRIDOXAL 5'-PHOSPHATE SYNTHASE SUBUNIT SNO"/>
    <property type="match status" value="1"/>
</dbReference>
<dbReference type="PANTHER" id="PTHR31559:SF0">
    <property type="entry name" value="PYRIDOXAL 5'-PHOSPHATE SYNTHASE SUBUNIT SNO1-RELATED"/>
    <property type="match status" value="1"/>
</dbReference>
<dbReference type="Pfam" id="PF01174">
    <property type="entry name" value="SNO"/>
    <property type="match status" value="1"/>
</dbReference>
<dbReference type="PIRSF" id="PIRSF005639">
    <property type="entry name" value="Glut_amidoT_SNO"/>
    <property type="match status" value="1"/>
</dbReference>
<dbReference type="SUPFAM" id="SSF52317">
    <property type="entry name" value="Class I glutamine amidotransferase-like"/>
    <property type="match status" value="1"/>
</dbReference>
<dbReference type="PROSITE" id="PS01236">
    <property type="entry name" value="PDXT_SNO_1"/>
    <property type="match status" value="1"/>
</dbReference>
<dbReference type="PROSITE" id="PS51130">
    <property type="entry name" value="PDXT_SNO_2"/>
    <property type="match status" value="1"/>
</dbReference>
<keyword id="KW-0315">Glutamine amidotransferase</keyword>
<keyword id="KW-0378">Hydrolase</keyword>
<keyword id="KW-0456">Lyase</keyword>
<keyword id="KW-0663">Pyridoxal phosphate</keyword>
<name>PDXT_MOOTA</name>
<sequence>MRIGVLAMQGAFREHIQSLEALGVQGVEIRHANQLEGIAGLIIPGGESTTIGKLMVEFNLLEPVRHLAEGGLPVFGTCAGMVLLARDIIGSDQPRLGLMNARVQRNAFGRQVDSFEVDLEIPVLGEEPFHAVFIRAPYIEEIEPPAEALATFKDKIVMVRQGNLLATAFHPELTKDLRVHSYFLKMIG</sequence>
<evidence type="ECO:0000255" key="1">
    <source>
        <dbReference type="HAMAP-Rule" id="MF_01615"/>
    </source>
</evidence>
<feature type="chain" id="PRO_0000255834" description="Pyridoxal 5'-phosphate synthase subunit PdxT">
    <location>
        <begin position="1"/>
        <end position="188"/>
    </location>
</feature>
<feature type="active site" description="Nucleophile" evidence="1">
    <location>
        <position position="78"/>
    </location>
</feature>
<feature type="active site" description="Charge relay system" evidence="1">
    <location>
        <position position="170"/>
    </location>
</feature>
<feature type="active site" description="Charge relay system" evidence="1">
    <location>
        <position position="172"/>
    </location>
</feature>
<feature type="binding site" evidence="1">
    <location>
        <begin position="46"/>
        <end position="48"/>
    </location>
    <ligand>
        <name>L-glutamine</name>
        <dbReference type="ChEBI" id="CHEBI:58359"/>
    </ligand>
</feature>
<feature type="binding site" evidence="1">
    <location>
        <position position="105"/>
    </location>
    <ligand>
        <name>L-glutamine</name>
        <dbReference type="ChEBI" id="CHEBI:58359"/>
    </ligand>
</feature>
<feature type="binding site" evidence="1">
    <location>
        <begin position="134"/>
        <end position="135"/>
    </location>
    <ligand>
        <name>L-glutamine</name>
        <dbReference type="ChEBI" id="CHEBI:58359"/>
    </ligand>
</feature>
<organism>
    <name type="scientific">Moorella thermoacetica (strain ATCC 39073 / JCM 9320)</name>
    <dbReference type="NCBI Taxonomy" id="264732"/>
    <lineage>
        <taxon>Bacteria</taxon>
        <taxon>Bacillati</taxon>
        <taxon>Bacillota</taxon>
        <taxon>Clostridia</taxon>
        <taxon>Moorellales</taxon>
        <taxon>Moorellaceae</taxon>
        <taxon>Moorella</taxon>
    </lineage>
</organism>
<gene>
    <name evidence="1" type="primary">pdxT</name>
    <name type="ordered locus">Moth_0010</name>
</gene>
<accession>Q2RMI9</accession>